<accession>Q8VUR8</accession>
<keyword id="KW-0414">Isoprene biosynthesis</keyword>
<keyword id="KW-0460">Magnesium</keyword>
<keyword id="KW-0479">Metal-binding</keyword>
<keyword id="KW-0784">Thiamine biosynthesis</keyword>
<keyword id="KW-0786">Thiamine pyrophosphate</keyword>
<keyword id="KW-0808">Transferase</keyword>
<sequence length="633" mass="67639">MALLTRIRGPRDLDRLTPAQLAELAEEIRAFLVEEVSKTGGHLGPNLGVVELTLAMHRVFDSPRDRILFDTGHQSYVHKLLTGRQDFSRLKMKGGLSGYPSRAESEHDVIENSHASTVLGYADGLAKANKIQGHKDRPVVAVIGDGALTGGMAWEALNNIADSQDLPIVIVVNDNERSYSPTIGGLANHLATLRTTQGYERFLSWGKDALQRTPVVGQAMFDTLHGAKKGLKDFIAPQGMFEDLGLKYLGPIDGHDLQALESAFTKARNFGGPVIVHCITEKGRGYHAAENNDEDRFHAVGVIHPDTGLPVKTSGKDWTSVFGEEMVALGRERRDLVAITAAMLHPVGLAPFAKAYPERIFDVGIAEQHAAVCAAGLATNGLHPVVAVYATFLNRAFDQVLMDVALHKLGVTFVLDRAGVTGTDGASHNGMWDMSILQVVPGLRLAAPRDAEQVRLQLREAVEVADAPTVVRYSKGNVGPAVPAVGTVGGMDVLRRPEADSADEAADVLIVSIGAMAPTCLEAAELLAQQGISSTVVDPRWVKPVDAALPGLAAQHRLVVTVEDNGRAGGVGSAIAQALRDADVDVPLRDFGIPQEFLDHASRGEILDEIGLTAPAIAKKIEALVSTRSFARS</sequence>
<comment type="function">
    <text evidence="1">Catalyzes the acyloin condensation reaction between C atoms 2 and 3 of pyruvate and glyceraldehyde 3-phosphate to yield 1-deoxy-D-xylulose-5-phosphate (DXP).</text>
</comment>
<comment type="catalytic activity">
    <reaction evidence="1">
        <text>D-glyceraldehyde 3-phosphate + pyruvate + H(+) = 1-deoxy-D-xylulose 5-phosphate + CO2</text>
        <dbReference type="Rhea" id="RHEA:12605"/>
        <dbReference type="ChEBI" id="CHEBI:15361"/>
        <dbReference type="ChEBI" id="CHEBI:15378"/>
        <dbReference type="ChEBI" id="CHEBI:16526"/>
        <dbReference type="ChEBI" id="CHEBI:57792"/>
        <dbReference type="ChEBI" id="CHEBI:59776"/>
        <dbReference type="EC" id="2.2.1.7"/>
    </reaction>
</comment>
<comment type="cofactor">
    <cofactor evidence="1">
        <name>Mg(2+)</name>
        <dbReference type="ChEBI" id="CHEBI:18420"/>
    </cofactor>
    <text evidence="1">Binds 1 Mg(2+) ion per subunit.</text>
</comment>
<comment type="cofactor">
    <cofactor evidence="1">
        <name>thiamine diphosphate</name>
        <dbReference type="ChEBI" id="CHEBI:58937"/>
    </cofactor>
    <text evidence="1">Binds 1 thiamine pyrophosphate per subunit.</text>
</comment>
<comment type="pathway">
    <text evidence="1">Metabolic intermediate biosynthesis; 1-deoxy-D-xylulose 5-phosphate biosynthesis; 1-deoxy-D-xylulose 5-phosphate from D-glyceraldehyde 3-phosphate and pyruvate: step 1/1.</text>
</comment>
<comment type="subunit">
    <text evidence="1">Homodimer.</text>
</comment>
<comment type="similarity">
    <text evidence="1">Belongs to the transketolase family. DXPS subfamily.</text>
</comment>
<name>DXS2_KITGR</name>
<organism>
    <name type="scientific">Kitasatospora griseola</name>
    <name type="common">Streptomyces griseolosporeus</name>
    <dbReference type="NCBI Taxonomy" id="2064"/>
    <lineage>
        <taxon>Bacteria</taxon>
        <taxon>Bacillati</taxon>
        <taxon>Actinomycetota</taxon>
        <taxon>Actinomycetes</taxon>
        <taxon>Kitasatosporales</taxon>
        <taxon>Streptomycetaceae</taxon>
        <taxon>Kitasatospora</taxon>
    </lineage>
</organism>
<gene>
    <name evidence="1" type="primary">dxs2</name>
</gene>
<feature type="chain" id="PRO_0000189122" description="1-deoxy-D-xylulose-5-phosphate synthase 2">
    <location>
        <begin position="1"/>
        <end position="633"/>
    </location>
</feature>
<feature type="binding site" evidence="1">
    <location>
        <position position="73"/>
    </location>
    <ligand>
        <name>thiamine diphosphate</name>
        <dbReference type="ChEBI" id="CHEBI:58937"/>
    </ligand>
</feature>
<feature type="binding site" evidence="1">
    <location>
        <begin position="113"/>
        <end position="115"/>
    </location>
    <ligand>
        <name>thiamine diphosphate</name>
        <dbReference type="ChEBI" id="CHEBI:58937"/>
    </ligand>
</feature>
<feature type="binding site" evidence="1">
    <location>
        <position position="145"/>
    </location>
    <ligand>
        <name>Mg(2+)</name>
        <dbReference type="ChEBI" id="CHEBI:18420"/>
    </ligand>
</feature>
<feature type="binding site" evidence="1">
    <location>
        <begin position="146"/>
        <end position="147"/>
    </location>
    <ligand>
        <name>thiamine diphosphate</name>
        <dbReference type="ChEBI" id="CHEBI:58937"/>
    </ligand>
</feature>
<feature type="binding site" evidence="1">
    <location>
        <position position="175"/>
    </location>
    <ligand>
        <name>Mg(2+)</name>
        <dbReference type="ChEBI" id="CHEBI:18420"/>
    </ligand>
</feature>
<feature type="binding site" evidence="1">
    <location>
        <position position="175"/>
    </location>
    <ligand>
        <name>thiamine diphosphate</name>
        <dbReference type="ChEBI" id="CHEBI:58937"/>
    </ligand>
</feature>
<feature type="binding site" evidence="1">
    <location>
        <position position="286"/>
    </location>
    <ligand>
        <name>thiamine diphosphate</name>
        <dbReference type="ChEBI" id="CHEBI:58937"/>
    </ligand>
</feature>
<feature type="binding site" evidence="1">
    <location>
        <position position="367"/>
    </location>
    <ligand>
        <name>thiamine diphosphate</name>
        <dbReference type="ChEBI" id="CHEBI:58937"/>
    </ligand>
</feature>
<reference key="1">
    <citation type="journal article" date="2002" name="Biosci. Biotechnol. Biochem.">
        <title>Growth-phase dependent expression of the mevalonate pathway in a terpenoid antibiotic-producing Streptomyces strain.</title>
        <authorList>
            <person name="Hamano Y."/>
            <person name="Dairi T."/>
            <person name="Yamamoto M."/>
            <person name="Kuzuyama T."/>
            <person name="Itoh N."/>
            <person name="Seto H."/>
        </authorList>
    </citation>
    <scope>NUCLEOTIDE SEQUENCE [GENOMIC DNA]</scope>
    <source>
        <strain>MF730-N6</strain>
    </source>
</reference>
<protein>
    <recommendedName>
        <fullName evidence="1">1-deoxy-D-xylulose-5-phosphate synthase 2</fullName>
        <ecNumber evidence="1">2.2.1.7</ecNumber>
    </recommendedName>
    <alternativeName>
        <fullName evidence="1">1-deoxyxylulose-5-phosphate synthase 2</fullName>
        <shortName evidence="1">DXP synthase 2</shortName>
        <shortName evidence="1">DXPS 2</shortName>
    </alternativeName>
</protein>
<proteinExistence type="inferred from homology"/>
<evidence type="ECO:0000255" key="1">
    <source>
        <dbReference type="HAMAP-Rule" id="MF_00315"/>
    </source>
</evidence>
<dbReference type="EC" id="2.2.1.7" evidence="1"/>
<dbReference type="EMBL" id="AB064999">
    <property type="protein sequence ID" value="BAB83664.1"/>
    <property type="molecule type" value="Genomic_DNA"/>
</dbReference>
<dbReference type="RefSeq" id="WP_200895355.1">
    <property type="nucleotide sequence ID" value="NZ_CP173360.1"/>
</dbReference>
<dbReference type="SMR" id="Q8VUR8"/>
<dbReference type="STRING" id="2064.TR51_08925"/>
<dbReference type="UniPathway" id="UPA00064">
    <property type="reaction ID" value="UER00091"/>
</dbReference>
<dbReference type="GO" id="GO:0005829">
    <property type="term" value="C:cytosol"/>
    <property type="evidence" value="ECO:0007669"/>
    <property type="project" value="TreeGrafter"/>
</dbReference>
<dbReference type="GO" id="GO:0008661">
    <property type="term" value="F:1-deoxy-D-xylulose-5-phosphate synthase activity"/>
    <property type="evidence" value="ECO:0007669"/>
    <property type="project" value="UniProtKB-UniRule"/>
</dbReference>
<dbReference type="GO" id="GO:0000287">
    <property type="term" value="F:magnesium ion binding"/>
    <property type="evidence" value="ECO:0007669"/>
    <property type="project" value="UniProtKB-UniRule"/>
</dbReference>
<dbReference type="GO" id="GO:0030976">
    <property type="term" value="F:thiamine pyrophosphate binding"/>
    <property type="evidence" value="ECO:0007669"/>
    <property type="project" value="UniProtKB-UniRule"/>
</dbReference>
<dbReference type="GO" id="GO:0052865">
    <property type="term" value="P:1-deoxy-D-xylulose 5-phosphate biosynthetic process"/>
    <property type="evidence" value="ECO:0007669"/>
    <property type="project" value="UniProtKB-UniPathway"/>
</dbReference>
<dbReference type="GO" id="GO:0019288">
    <property type="term" value="P:isopentenyl diphosphate biosynthetic process, methylerythritol 4-phosphate pathway"/>
    <property type="evidence" value="ECO:0007669"/>
    <property type="project" value="TreeGrafter"/>
</dbReference>
<dbReference type="GO" id="GO:0016114">
    <property type="term" value="P:terpenoid biosynthetic process"/>
    <property type="evidence" value="ECO:0007669"/>
    <property type="project" value="UniProtKB-UniRule"/>
</dbReference>
<dbReference type="GO" id="GO:0009228">
    <property type="term" value="P:thiamine biosynthetic process"/>
    <property type="evidence" value="ECO:0007669"/>
    <property type="project" value="UniProtKB-UniRule"/>
</dbReference>
<dbReference type="CDD" id="cd02007">
    <property type="entry name" value="TPP_DXS"/>
    <property type="match status" value="1"/>
</dbReference>
<dbReference type="CDD" id="cd07033">
    <property type="entry name" value="TPP_PYR_DXS_TK_like"/>
    <property type="match status" value="1"/>
</dbReference>
<dbReference type="FunFam" id="3.40.50.920:FF:000002">
    <property type="entry name" value="1-deoxy-D-xylulose-5-phosphate synthase"/>
    <property type="match status" value="1"/>
</dbReference>
<dbReference type="FunFam" id="3.40.50.970:FF:000005">
    <property type="entry name" value="1-deoxy-D-xylulose-5-phosphate synthase"/>
    <property type="match status" value="1"/>
</dbReference>
<dbReference type="Gene3D" id="3.40.50.920">
    <property type="match status" value="1"/>
</dbReference>
<dbReference type="Gene3D" id="3.40.50.970">
    <property type="match status" value="2"/>
</dbReference>
<dbReference type="HAMAP" id="MF_00315">
    <property type="entry name" value="DXP_synth"/>
    <property type="match status" value="1"/>
</dbReference>
<dbReference type="InterPro" id="IPR005477">
    <property type="entry name" value="Dxylulose-5-P_synthase"/>
</dbReference>
<dbReference type="InterPro" id="IPR029061">
    <property type="entry name" value="THDP-binding"/>
</dbReference>
<dbReference type="InterPro" id="IPR009014">
    <property type="entry name" value="Transketo_C/PFOR_II"/>
</dbReference>
<dbReference type="InterPro" id="IPR005475">
    <property type="entry name" value="Transketolase-like_Pyr-bd"/>
</dbReference>
<dbReference type="InterPro" id="IPR020826">
    <property type="entry name" value="Transketolase_BS"/>
</dbReference>
<dbReference type="InterPro" id="IPR033248">
    <property type="entry name" value="Transketolase_C"/>
</dbReference>
<dbReference type="InterPro" id="IPR049557">
    <property type="entry name" value="Transketolase_CS"/>
</dbReference>
<dbReference type="NCBIfam" id="TIGR00204">
    <property type="entry name" value="dxs"/>
    <property type="match status" value="1"/>
</dbReference>
<dbReference type="NCBIfam" id="NF003933">
    <property type="entry name" value="PRK05444.2-2"/>
    <property type="match status" value="1"/>
</dbReference>
<dbReference type="PANTHER" id="PTHR43322">
    <property type="entry name" value="1-D-DEOXYXYLULOSE 5-PHOSPHATE SYNTHASE-RELATED"/>
    <property type="match status" value="1"/>
</dbReference>
<dbReference type="PANTHER" id="PTHR43322:SF5">
    <property type="entry name" value="1-DEOXY-D-XYLULOSE-5-PHOSPHATE SYNTHASE, CHLOROPLASTIC"/>
    <property type="match status" value="1"/>
</dbReference>
<dbReference type="Pfam" id="PF13292">
    <property type="entry name" value="DXP_synthase_N"/>
    <property type="match status" value="1"/>
</dbReference>
<dbReference type="Pfam" id="PF02779">
    <property type="entry name" value="Transket_pyr"/>
    <property type="match status" value="1"/>
</dbReference>
<dbReference type="Pfam" id="PF02780">
    <property type="entry name" value="Transketolase_C"/>
    <property type="match status" value="1"/>
</dbReference>
<dbReference type="SMART" id="SM00861">
    <property type="entry name" value="Transket_pyr"/>
    <property type="match status" value="1"/>
</dbReference>
<dbReference type="SUPFAM" id="SSF52518">
    <property type="entry name" value="Thiamin diphosphate-binding fold (THDP-binding)"/>
    <property type="match status" value="2"/>
</dbReference>
<dbReference type="SUPFAM" id="SSF52922">
    <property type="entry name" value="TK C-terminal domain-like"/>
    <property type="match status" value="1"/>
</dbReference>
<dbReference type="PROSITE" id="PS00801">
    <property type="entry name" value="TRANSKETOLASE_1"/>
    <property type="match status" value="1"/>
</dbReference>
<dbReference type="PROSITE" id="PS00802">
    <property type="entry name" value="TRANSKETOLASE_2"/>
    <property type="match status" value="1"/>
</dbReference>